<proteinExistence type="evidence at protein level"/>
<feature type="initiator methionine" description="Removed" evidence="3">
    <location>
        <position position="1"/>
    </location>
</feature>
<feature type="chain" id="PRO_0000304512" description="Calcium-dependent protein kinase 10">
    <location>
        <begin position="2"/>
        <end position="545"/>
    </location>
</feature>
<feature type="domain" description="Protein kinase" evidence="4">
    <location>
        <begin position="63"/>
        <end position="321"/>
    </location>
</feature>
<feature type="domain" description="EF-hand 1" evidence="5">
    <location>
        <begin position="364"/>
        <end position="399"/>
    </location>
</feature>
<feature type="domain" description="EF-hand 2" evidence="5">
    <location>
        <begin position="400"/>
        <end position="435"/>
    </location>
</feature>
<feature type="domain" description="EF-hand 3" evidence="5">
    <location>
        <begin position="436"/>
        <end position="471"/>
    </location>
</feature>
<feature type="domain" description="EF-hand 4" evidence="5">
    <location>
        <begin position="472"/>
        <end position="507"/>
    </location>
</feature>
<feature type="region of interest" description="Disordered" evidence="7">
    <location>
        <begin position="1"/>
        <end position="36"/>
    </location>
</feature>
<feature type="region of interest" description="Autoinhibitory domain" evidence="1">
    <location>
        <begin position="327"/>
        <end position="357"/>
    </location>
</feature>
<feature type="active site" description="Proton acceptor" evidence="4 6">
    <location>
        <position position="187"/>
    </location>
</feature>
<feature type="binding site" evidence="4">
    <location>
        <begin position="69"/>
        <end position="77"/>
    </location>
    <ligand>
        <name>ATP</name>
        <dbReference type="ChEBI" id="CHEBI:30616"/>
    </ligand>
</feature>
<feature type="binding site" evidence="4">
    <location>
        <position position="92"/>
    </location>
    <ligand>
        <name>ATP</name>
        <dbReference type="ChEBI" id="CHEBI:30616"/>
    </ligand>
</feature>
<feature type="binding site" evidence="5">
    <location>
        <position position="377"/>
    </location>
    <ligand>
        <name>Ca(2+)</name>
        <dbReference type="ChEBI" id="CHEBI:29108"/>
        <label>1</label>
    </ligand>
</feature>
<feature type="binding site" evidence="5">
    <location>
        <position position="379"/>
    </location>
    <ligand>
        <name>Ca(2+)</name>
        <dbReference type="ChEBI" id="CHEBI:29108"/>
        <label>1</label>
    </ligand>
</feature>
<feature type="binding site" evidence="5">
    <location>
        <position position="381"/>
    </location>
    <ligand>
        <name>Ca(2+)</name>
        <dbReference type="ChEBI" id="CHEBI:29108"/>
        <label>1</label>
    </ligand>
</feature>
<feature type="binding site" evidence="5">
    <location>
        <position position="383"/>
    </location>
    <ligand>
        <name>Ca(2+)</name>
        <dbReference type="ChEBI" id="CHEBI:29108"/>
        <label>1</label>
    </ligand>
</feature>
<feature type="binding site" evidence="5">
    <location>
        <position position="388"/>
    </location>
    <ligand>
        <name>Ca(2+)</name>
        <dbReference type="ChEBI" id="CHEBI:29108"/>
        <label>1</label>
    </ligand>
</feature>
<feature type="binding site" evidence="5">
    <location>
        <position position="413"/>
    </location>
    <ligand>
        <name>Ca(2+)</name>
        <dbReference type="ChEBI" id="CHEBI:29108"/>
        <label>2</label>
    </ligand>
</feature>
<feature type="binding site" evidence="5">
    <location>
        <position position="415"/>
    </location>
    <ligand>
        <name>Ca(2+)</name>
        <dbReference type="ChEBI" id="CHEBI:29108"/>
        <label>2</label>
    </ligand>
</feature>
<feature type="binding site" evidence="5">
    <location>
        <position position="417"/>
    </location>
    <ligand>
        <name>Ca(2+)</name>
        <dbReference type="ChEBI" id="CHEBI:29108"/>
        <label>2</label>
    </ligand>
</feature>
<feature type="binding site" evidence="5">
    <location>
        <position position="424"/>
    </location>
    <ligand>
        <name>Ca(2+)</name>
        <dbReference type="ChEBI" id="CHEBI:29108"/>
        <label>2</label>
    </ligand>
</feature>
<feature type="binding site" evidence="10">
    <location>
        <position position="449"/>
    </location>
    <ligand>
        <name>Ca(2+)</name>
        <dbReference type="ChEBI" id="CHEBI:29108"/>
        <label>3</label>
    </ligand>
</feature>
<feature type="binding site" evidence="10">
    <location>
        <position position="451"/>
    </location>
    <ligand>
        <name>Ca(2+)</name>
        <dbReference type="ChEBI" id="CHEBI:29108"/>
        <label>3</label>
    </ligand>
</feature>
<feature type="binding site" evidence="10">
    <location>
        <position position="453"/>
    </location>
    <ligand>
        <name>Ca(2+)</name>
        <dbReference type="ChEBI" id="CHEBI:29108"/>
        <label>3</label>
    </ligand>
</feature>
<feature type="binding site" evidence="10">
    <location>
        <position position="455"/>
    </location>
    <ligand>
        <name>Ca(2+)</name>
        <dbReference type="ChEBI" id="CHEBI:29108"/>
        <label>3</label>
    </ligand>
</feature>
<feature type="binding site" evidence="10">
    <location>
        <position position="460"/>
    </location>
    <ligand>
        <name>Ca(2+)</name>
        <dbReference type="ChEBI" id="CHEBI:29108"/>
        <label>3</label>
    </ligand>
</feature>
<feature type="binding site" evidence="5">
    <location>
        <position position="485"/>
    </location>
    <ligand>
        <name>Ca(2+)</name>
        <dbReference type="ChEBI" id="CHEBI:29108"/>
        <label>4</label>
    </ligand>
</feature>
<feature type="binding site" evidence="5">
    <location>
        <position position="487"/>
    </location>
    <ligand>
        <name>Ca(2+)</name>
        <dbReference type="ChEBI" id="CHEBI:29108"/>
        <label>4</label>
    </ligand>
</feature>
<feature type="binding site" evidence="5">
    <location>
        <position position="489"/>
    </location>
    <ligand>
        <name>Ca(2+)</name>
        <dbReference type="ChEBI" id="CHEBI:29108"/>
        <label>4</label>
    </ligand>
</feature>
<feature type="binding site" evidence="5">
    <location>
        <position position="491"/>
    </location>
    <ligand>
        <name>Ca(2+)</name>
        <dbReference type="ChEBI" id="CHEBI:29108"/>
        <label>4</label>
    </ligand>
</feature>
<feature type="binding site" evidence="5">
    <location>
        <position position="496"/>
    </location>
    <ligand>
        <name>Ca(2+)</name>
        <dbReference type="ChEBI" id="CHEBI:29108"/>
        <label>4</label>
    </ligand>
</feature>
<feature type="modified residue" description="Phosphoserine" evidence="2">
    <location>
        <position position="227"/>
    </location>
</feature>
<feature type="lipid moiety-binding region" description="N-myristoyl glycine" evidence="3">
    <location>
        <position position="2"/>
    </location>
</feature>
<feature type="mutagenesis site" description="Loss of function." evidence="9">
    <original>K</original>
    <variation>M</variation>
    <location>
        <position position="92"/>
    </location>
</feature>
<feature type="sequence conflict" description="In Ref. 3; AAO42812." evidence="10" ref="3">
    <original>A</original>
    <variation>V</variation>
    <location>
        <position position="168"/>
    </location>
</feature>
<comment type="function">
    <text evidence="8 9">May play a role in signal transduction pathways that involve calcium as a second messenger. May be a positive regulator controlling stress signal transduction.</text>
</comment>
<comment type="catalytic activity">
    <reaction>
        <text>L-seryl-[protein] + ATP = O-phospho-L-seryl-[protein] + ADP + H(+)</text>
        <dbReference type="Rhea" id="RHEA:17989"/>
        <dbReference type="Rhea" id="RHEA-COMP:9863"/>
        <dbReference type="Rhea" id="RHEA-COMP:11604"/>
        <dbReference type="ChEBI" id="CHEBI:15378"/>
        <dbReference type="ChEBI" id="CHEBI:29999"/>
        <dbReference type="ChEBI" id="CHEBI:30616"/>
        <dbReference type="ChEBI" id="CHEBI:83421"/>
        <dbReference type="ChEBI" id="CHEBI:456216"/>
        <dbReference type="EC" id="2.7.11.1"/>
    </reaction>
</comment>
<comment type="catalytic activity">
    <reaction>
        <text>L-threonyl-[protein] + ATP = O-phospho-L-threonyl-[protein] + ADP + H(+)</text>
        <dbReference type="Rhea" id="RHEA:46608"/>
        <dbReference type="Rhea" id="RHEA-COMP:11060"/>
        <dbReference type="Rhea" id="RHEA-COMP:11605"/>
        <dbReference type="ChEBI" id="CHEBI:15378"/>
        <dbReference type="ChEBI" id="CHEBI:30013"/>
        <dbReference type="ChEBI" id="CHEBI:30616"/>
        <dbReference type="ChEBI" id="CHEBI:61977"/>
        <dbReference type="ChEBI" id="CHEBI:456216"/>
        <dbReference type="EC" id="2.7.11.1"/>
    </reaction>
</comment>
<comment type="activity regulation">
    <text>Activated by calcium. Autophosphorylation may play an important role in the regulation of the kinase activity.</text>
</comment>
<comment type="subcellular location">
    <subcellularLocation>
        <location evidence="10">Membrane</location>
        <topology evidence="10">Lipid-anchor</topology>
    </subcellularLocation>
</comment>
<comment type="induction">
    <text evidence="8">By drought and high-slat stress, but not by low-temperature, heat stress or abscisic acid treatment.</text>
</comment>
<comment type="domain">
    <text evidence="1">There are 3 contiguous domains conserved in the CDPK subfamily: a kinase domain, an autoinhibitory (junction) domain and a calmodulin-like domain. The autoinhibitory domain (327-357) inactivates kinase activity under calcium-free conditions (By similarity).</text>
</comment>
<comment type="similarity">
    <text evidence="4">Belongs to the protein kinase superfamily. Ser/Thr protein kinase family. CDPK subfamily.</text>
</comment>
<comment type="sequence caution" evidence="10">
    <conflict type="erroneous initiation">
        <sequence resource="EMBL-CDS" id="BAA04829"/>
    </conflict>
</comment>
<evidence type="ECO:0000250" key="1"/>
<evidence type="ECO:0000250" key="2">
    <source>
        <dbReference type="UniProtKB" id="Q9FKW4"/>
    </source>
</evidence>
<evidence type="ECO:0000255" key="3"/>
<evidence type="ECO:0000255" key="4">
    <source>
        <dbReference type="PROSITE-ProRule" id="PRU00159"/>
    </source>
</evidence>
<evidence type="ECO:0000255" key="5">
    <source>
        <dbReference type="PROSITE-ProRule" id="PRU00448"/>
    </source>
</evidence>
<evidence type="ECO:0000255" key="6">
    <source>
        <dbReference type="PROSITE-ProRule" id="PRU10027"/>
    </source>
</evidence>
<evidence type="ECO:0000256" key="7">
    <source>
        <dbReference type="SAM" id="MobiDB-lite"/>
    </source>
</evidence>
<evidence type="ECO:0000269" key="8">
    <source>
    </source>
</evidence>
<evidence type="ECO:0000269" key="9">
    <source>
    </source>
</evidence>
<evidence type="ECO:0000305" key="10"/>
<protein>
    <recommendedName>
        <fullName>Calcium-dependent protein kinase 10</fullName>
        <ecNumber>2.7.11.1</ecNumber>
    </recommendedName>
    <alternativeName>
        <fullName>Calcium-dependent protein kinase isoform CDPK1</fullName>
        <shortName>AtCDPK1</shortName>
    </alternativeName>
</protein>
<organism>
    <name type="scientific">Arabidopsis thaliana</name>
    <name type="common">Mouse-ear cress</name>
    <dbReference type="NCBI Taxonomy" id="3702"/>
    <lineage>
        <taxon>Eukaryota</taxon>
        <taxon>Viridiplantae</taxon>
        <taxon>Streptophyta</taxon>
        <taxon>Embryophyta</taxon>
        <taxon>Tracheophyta</taxon>
        <taxon>Spermatophyta</taxon>
        <taxon>Magnoliopsida</taxon>
        <taxon>eudicotyledons</taxon>
        <taxon>Gunneridae</taxon>
        <taxon>Pentapetalae</taxon>
        <taxon>rosids</taxon>
        <taxon>malvids</taxon>
        <taxon>Brassicales</taxon>
        <taxon>Brassicaceae</taxon>
        <taxon>Camelineae</taxon>
        <taxon>Arabidopsis</taxon>
    </lineage>
</organism>
<reference key="1">
    <citation type="journal article" date="2000" name="Nature">
        <title>Sequence and analysis of chromosome 1 of the plant Arabidopsis thaliana.</title>
        <authorList>
            <person name="Theologis A."/>
            <person name="Ecker J.R."/>
            <person name="Palm C.J."/>
            <person name="Federspiel N.A."/>
            <person name="Kaul S."/>
            <person name="White O."/>
            <person name="Alonso J."/>
            <person name="Altafi H."/>
            <person name="Araujo R."/>
            <person name="Bowman C.L."/>
            <person name="Brooks S.Y."/>
            <person name="Buehler E."/>
            <person name="Chan A."/>
            <person name="Chao Q."/>
            <person name="Chen H."/>
            <person name="Cheuk R.F."/>
            <person name="Chin C.W."/>
            <person name="Chung M.K."/>
            <person name="Conn L."/>
            <person name="Conway A.B."/>
            <person name="Conway A.R."/>
            <person name="Creasy T.H."/>
            <person name="Dewar K."/>
            <person name="Dunn P."/>
            <person name="Etgu P."/>
            <person name="Feldblyum T.V."/>
            <person name="Feng J.-D."/>
            <person name="Fong B."/>
            <person name="Fujii C.Y."/>
            <person name="Gill J.E."/>
            <person name="Goldsmith A.D."/>
            <person name="Haas B."/>
            <person name="Hansen N.F."/>
            <person name="Hughes B."/>
            <person name="Huizar L."/>
            <person name="Hunter J.L."/>
            <person name="Jenkins J."/>
            <person name="Johnson-Hopson C."/>
            <person name="Khan S."/>
            <person name="Khaykin E."/>
            <person name="Kim C.J."/>
            <person name="Koo H.L."/>
            <person name="Kremenetskaia I."/>
            <person name="Kurtz D.B."/>
            <person name="Kwan A."/>
            <person name="Lam B."/>
            <person name="Langin-Hooper S."/>
            <person name="Lee A."/>
            <person name="Lee J.M."/>
            <person name="Lenz C.A."/>
            <person name="Li J.H."/>
            <person name="Li Y.-P."/>
            <person name="Lin X."/>
            <person name="Liu S.X."/>
            <person name="Liu Z.A."/>
            <person name="Luros J.S."/>
            <person name="Maiti R."/>
            <person name="Marziali A."/>
            <person name="Militscher J."/>
            <person name="Miranda M."/>
            <person name="Nguyen M."/>
            <person name="Nierman W.C."/>
            <person name="Osborne B.I."/>
            <person name="Pai G."/>
            <person name="Peterson J."/>
            <person name="Pham P.K."/>
            <person name="Rizzo M."/>
            <person name="Rooney T."/>
            <person name="Rowley D."/>
            <person name="Sakano H."/>
            <person name="Salzberg S.L."/>
            <person name="Schwartz J.R."/>
            <person name="Shinn P."/>
            <person name="Southwick A.M."/>
            <person name="Sun H."/>
            <person name="Tallon L.J."/>
            <person name="Tambunga G."/>
            <person name="Toriumi M.J."/>
            <person name="Town C.D."/>
            <person name="Utterback T."/>
            <person name="Van Aken S."/>
            <person name="Vaysberg M."/>
            <person name="Vysotskaia V.S."/>
            <person name="Walker M."/>
            <person name="Wu D."/>
            <person name="Yu G."/>
            <person name="Fraser C.M."/>
            <person name="Venter J.C."/>
            <person name="Davis R.W."/>
        </authorList>
    </citation>
    <scope>NUCLEOTIDE SEQUENCE [LARGE SCALE GENOMIC DNA]</scope>
    <source>
        <strain>cv. Columbia</strain>
    </source>
</reference>
<reference key="2">
    <citation type="journal article" date="2017" name="Plant J.">
        <title>Araport11: a complete reannotation of the Arabidopsis thaliana reference genome.</title>
        <authorList>
            <person name="Cheng C.Y."/>
            <person name="Krishnakumar V."/>
            <person name="Chan A.P."/>
            <person name="Thibaud-Nissen F."/>
            <person name="Schobel S."/>
            <person name="Town C.D."/>
        </authorList>
    </citation>
    <scope>GENOME REANNOTATION</scope>
    <source>
        <strain>cv. Columbia</strain>
    </source>
</reference>
<reference key="3">
    <citation type="journal article" date="2003" name="Science">
        <title>Empirical analysis of transcriptional activity in the Arabidopsis genome.</title>
        <authorList>
            <person name="Yamada K."/>
            <person name="Lim J."/>
            <person name="Dale J.M."/>
            <person name="Chen H."/>
            <person name="Shinn P."/>
            <person name="Palm C.J."/>
            <person name="Southwick A.M."/>
            <person name="Wu H.C."/>
            <person name="Kim C.J."/>
            <person name="Nguyen M."/>
            <person name="Pham P.K."/>
            <person name="Cheuk R.F."/>
            <person name="Karlin-Newmann G."/>
            <person name="Liu S.X."/>
            <person name="Lam B."/>
            <person name="Sakano H."/>
            <person name="Wu T."/>
            <person name="Yu G."/>
            <person name="Miranda M."/>
            <person name="Quach H.L."/>
            <person name="Tripp M."/>
            <person name="Chang C.H."/>
            <person name="Lee J.M."/>
            <person name="Toriumi M.J."/>
            <person name="Chan M.M."/>
            <person name="Tang C.C."/>
            <person name="Onodera C.S."/>
            <person name="Deng J.M."/>
            <person name="Akiyama K."/>
            <person name="Ansari Y."/>
            <person name="Arakawa T."/>
            <person name="Banh J."/>
            <person name="Banno F."/>
            <person name="Bowser L."/>
            <person name="Brooks S.Y."/>
            <person name="Carninci P."/>
            <person name="Chao Q."/>
            <person name="Choy N."/>
            <person name="Enju A."/>
            <person name="Goldsmith A.D."/>
            <person name="Gurjal M."/>
            <person name="Hansen N.F."/>
            <person name="Hayashizaki Y."/>
            <person name="Johnson-Hopson C."/>
            <person name="Hsuan V.W."/>
            <person name="Iida K."/>
            <person name="Karnes M."/>
            <person name="Khan S."/>
            <person name="Koesema E."/>
            <person name="Ishida J."/>
            <person name="Jiang P.X."/>
            <person name="Jones T."/>
            <person name="Kawai J."/>
            <person name="Kamiya A."/>
            <person name="Meyers C."/>
            <person name="Nakajima M."/>
            <person name="Narusaka M."/>
            <person name="Seki M."/>
            <person name="Sakurai T."/>
            <person name="Satou M."/>
            <person name="Tamse R."/>
            <person name="Vaysberg M."/>
            <person name="Wallender E.K."/>
            <person name="Wong C."/>
            <person name="Yamamura Y."/>
            <person name="Yuan S."/>
            <person name="Shinozaki K."/>
            <person name="Davis R.W."/>
            <person name="Theologis A."/>
            <person name="Ecker J.R."/>
        </authorList>
    </citation>
    <scope>NUCLEOTIDE SEQUENCE [LARGE SCALE MRNA]</scope>
    <source>
        <strain>cv. Columbia</strain>
    </source>
</reference>
<reference key="4">
    <citation type="submission" date="2006-07" db="EMBL/GenBank/DDBJ databases">
        <title>Large-scale analysis of RIKEN Arabidopsis full-length (RAFL) cDNAs.</title>
        <authorList>
            <person name="Totoki Y."/>
            <person name="Seki M."/>
            <person name="Ishida J."/>
            <person name="Nakajima M."/>
            <person name="Enju A."/>
            <person name="Kamiya A."/>
            <person name="Narusaka M."/>
            <person name="Shin-i T."/>
            <person name="Nakagawa M."/>
            <person name="Sakamoto N."/>
            <person name="Oishi K."/>
            <person name="Kohara Y."/>
            <person name="Kobayashi M."/>
            <person name="Toyoda A."/>
            <person name="Sakaki Y."/>
            <person name="Sakurai T."/>
            <person name="Iida K."/>
            <person name="Akiyama K."/>
            <person name="Satou M."/>
            <person name="Toyoda T."/>
            <person name="Konagaya A."/>
            <person name="Carninci P."/>
            <person name="Kawai J."/>
            <person name="Hayashizaki Y."/>
            <person name="Shinozaki K."/>
        </authorList>
    </citation>
    <scope>NUCLEOTIDE SEQUENCE [LARGE SCALE MRNA]</scope>
    <source>
        <strain>cv. Columbia</strain>
    </source>
</reference>
<reference key="5">
    <citation type="journal article" date="1994" name="Mol. Gen. Genet.">
        <title>Two genes that encode Ca(2+)-dependent protein kinases are induced by drought and high-salt stresses in Arabidopsis thaliana.</title>
        <authorList>
            <person name="Urao T."/>
            <person name="Katagiri T."/>
            <person name="Mizoguchi T."/>
            <person name="Yamaguchi-Shinozaki K."/>
            <person name="Hayashida N."/>
            <person name="Shinozaki K."/>
        </authorList>
    </citation>
    <scope>NUCLEOTIDE SEQUENCE [MRNA] OF 10-545</scope>
    <scope>FUNCTION</scope>
    <scope>INDUCTION</scope>
    <source>
        <strain>cv. Columbia</strain>
    </source>
</reference>
<reference key="6">
    <citation type="journal article" date="1996" name="Science">
        <title>Ca2+-dependent protein kinases and stress signal transduction in plants.</title>
        <authorList>
            <person name="Sheen J."/>
        </authorList>
    </citation>
    <scope>FUNCTION</scope>
    <scope>MUTAGENESIS OF LYS-92</scope>
</reference>
<reference key="7">
    <citation type="journal article" date="2001" name="New Phytol.">
        <title>The CDPK superfamily of protein kinases.</title>
        <authorList>
            <person name="Harmon A.C."/>
            <person name="Gribskov M."/>
            <person name="Gubrium E."/>
            <person name="Harper J.F."/>
        </authorList>
    </citation>
    <scope>GENE FAMILY</scope>
    <scope>NOMENCLATURE</scope>
</reference>
<reference key="8">
    <citation type="journal article" date="2002" name="Plant Physiol.">
        <title>Calcium signaling through protein kinases. The Arabidopsis calcium-dependent protein kinase gene family.</title>
        <authorList>
            <person name="Cheng S.-H."/>
            <person name="Willmann M.R."/>
            <person name="Chen H.-C."/>
            <person name="Sheen J."/>
        </authorList>
    </citation>
    <scope>GENE FAMILY</scope>
    <scope>NOMENCLATURE</scope>
</reference>
<reference key="9">
    <citation type="journal article" date="2003" name="Plant Physiol.">
        <title>The Arabidopsis CDPK-SnRK superfamily of protein kinases.</title>
        <authorList>
            <person name="Hrabak E.M."/>
            <person name="Chan C.W.M."/>
            <person name="Gribskov M."/>
            <person name="Harper J.F."/>
            <person name="Choi J.H."/>
            <person name="Halford N."/>
            <person name="Kudla J."/>
            <person name="Luan S."/>
            <person name="Nimmo H.G."/>
            <person name="Sussman M.R."/>
            <person name="Thomas M."/>
            <person name="Walker-Simmons K."/>
            <person name="Zhu J.-K."/>
            <person name="Harmon A.C."/>
        </authorList>
    </citation>
    <scope>GENE FAMILY</scope>
    <scope>NOMENCLATURE</scope>
</reference>
<name>CDPKA_ARATH</name>
<keyword id="KW-0067">ATP-binding</keyword>
<keyword id="KW-0106">Calcium</keyword>
<keyword id="KW-0418">Kinase</keyword>
<keyword id="KW-0449">Lipoprotein</keyword>
<keyword id="KW-0472">Membrane</keyword>
<keyword id="KW-0479">Metal-binding</keyword>
<keyword id="KW-0519">Myristate</keyword>
<keyword id="KW-0547">Nucleotide-binding</keyword>
<keyword id="KW-0597">Phosphoprotein</keyword>
<keyword id="KW-1185">Reference proteome</keyword>
<keyword id="KW-0677">Repeat</keyword>
<keyword id="KW-0723">Serine/threonine-protein kinase</keyword>
<keyword id="KW-0808">Transferase</keyword>
<gene>
    <name type="primary">CPK10</name>
    <name type="synonym">CDPK1</name>
    <name type="ordered locus">At1g18890</name>
    <name type="ORF">F6A14.1</name>
</gene>
<dbReference type="EC" id="2.7.11.1"/>
<dbReference type="EMBL" id="AC011809">
    <property type="protein sequence ID" value="AAF27092.1"/>
    <property type="molecule type" value="Genomic_DNA"/>
</dbReference>
<dbReference type="EMBL" id="AC068602">
    <property type="protein sequence ID" value="AAF79307.1"/>
    <property type="molecule type" value="Genomic_DNA"/>
</dbReference>
<dbReference type="EMBL" id="CP002684">
    <property type="protein sequence ID" value="AEE29777.1"/>
    <property type="molecule type" value="Genomic_DNA"/>
</dbReference>
<dbReference type="EMBL" id="BT004566">
    <property type="protein sequence ID" value="AAO42812.1"/>
    <property type="molecule type" value="mRNA"/>
</dbReference>
<dbReference type="EMBL" id="AK227602">
    <property type="protein sequence ID" value="BAE99593.1"/>
    <property type="molecule type" value="mRNA"/>
</dbReference>
<dbReference type="EMBL" id="D21805">
    <property type="protein sequence ID" value="BAA04829.1"/>
    <property type="status" value="ALT_INIT"/>
    <property type="molecule type" value="mRNA"/>
</dbReference>
<dbReference type="PIR" id="H86322">
    <property type="entry name" value="H86322"/>
</dbReference>
<dbReference type="PIR" id="S46283">
    <property type="entry name" value="S46283"/>
</dbReference>
<dbReference type="RefSeq" id="NP_564066.2">
    <property type="nucleotide sequence ID" value="NM_101746.5"/>
</dbReference>
<dbReference type="SMR" id="Q9M9V8"/>
<dbReference type="BioGRID" id="23709">
    <property type="interactions" value="4"/>
</dbReference>
<dbReference type="FunCoup" id="Q9M9V8">
    <property type="interactions" value="1776"/>
</dbReference>
<dbReference type="IntAct" id="Q9M9V8">
    <property type="interactions" value="2"/>
</dbReference>
<dbReference type="STRING" id="3702.Q9M9V8"/>
<dbReference type="iPTMnet" id="Q9M9V8"/>
<dbReference type="PaxDb" id="3702-AT1G18890.1"/>
<dbReference type="ProteomicsDB" id="220469"/>
<dbReference type="EnsemblPlants" id="AT1G18890.1">
    <property type="protein sequence ID" value="AT1G18890.1"/>
    <property type="gene ID" value="AT1G18890"/>
</dbReference>
<dbReference type="GeneID" id="838470"/>
<dbReference type="Gramene" id="AT1G18890.1">
    <property type="protein sequence ID" value="AT1G18890.1"/>
    <property type="gene ID" value="AT1G18890"/>
</dbReference>
<dbReference type="KEGG" id="ath:AT1G18890"/>
<dbReference type="Araport" id="AT1G18890"/>
<dbReference type="TAIR" id="AT1G18890">
    <property type="gene designation" value="CDPK1"/>
</dbReference>
<dbReference type="eggNOG" id="KOG0032">
    <property type="taxonomic scope" value="Eukaryota"/>
</dbReference>
<dbReference type="HOGENOM" id="CLU_000288_37_4_1"/>
<dbReference type="InParanoid" id="Q9M9V8"/>
<dbReference type="OMA" id="AHPWIQN"/>
<dbReference type="PhylomeDB" id="Q9M9V8"/>
<dbReference type="PRO" id="PR:Q9M9V8"/>
<dbReference type="Proteomes" id="UP000006548">
    <property type="component" value="Chromosome 1"/>
</dbReference>
<dbReference type="ExpressionAtlas" id="Q9M9V8">
    <property type="expression patterns" value="baseline and differential"/>
</dbReference>
<dbReference type="GO" id="GO:0016020">
    <property type="term" value="C:membrane"/>
    <property type="evidence" value="ECO:0007669"/>
    <property type="project" value="UniProtKB-SubCell"/>
</dbReference>
<dbReference type="GO" id="GO:0005524">
    <property type="term" value="F:ATP binding"/>
    <property type="evidence" value="ECO:0007669"/>
    <property type="project" value="UniProtKB-KW"/>
</dbReference>
<dbReference type="GO" id="GO:0005509">
    <property type="term" value="F:calcium ion binding"/>
    <property type="evidence" value="ECO:0007669"/>
    <property type="project" value="InterPro"/>
</dbReference>
<dbReference type="GO" id="GO:0004672">
    <property type="term" value="F:protein kinase activity"/>
    <property type="evidence" value="ECO:0000304"/>
    <property type="project" value="TAIR"/>
</dbReference>
<dbReference type="GO" id="GO:0106310">
    <property type="term" value="F:protein serine kinase activity"/>
    <property type="evidence" value="ECO:0007669"/>
    <property type="project" value="RHEA"/>
</dbReference>
<dbReference type="GO" id="GO:0004674">
    <property type="term" value="F:protein serine/threonine kinase activity"/>
    <property type="evidence" value="ECO:0007005"/>
    <property type="project" value="TAIR"/>
</dbReference>
<dbReference type="GO" id="GO:0009738">
    <property type="term" value="P:abscisic acid-activated signaling pathway"/>
    <property type="evidence" value="ECO:0000304"/>
    <property type="project" value="TAIR"/>
</dbReference>
<dbReference type="GO" id="GO:0046777">
    <property type="term" value="P:protein autophosphorylation"/>
    <property type="evidence" value="ECO:0007005"/>
    <property type="project" value="TAIR"/>
</dbReference>
<dbReference type="CDD" id="cd05117">
    <property type="entry name" value="STKc_CAMK"/>
    <property type="match status" value="1"/>
</dbReference>
<dbReference type="FunFam" id="3.30.200.20:FF:000004">
    <property type="entry name" value="Calcium-dependent protein kinase 1"/>
    <property type="match status" value="1"/>
</dbReference>
<dbReference type="FunFam" id="1.10.510.10:FF:000067">
    <property type="entry name" value="calcium-dependent protein kinase 13"/>
    <property type="match status" value="1"/>
</dbReference>
<dbReference type="FunFam" id="1.10.238.10:FF:000050">
    <property type="entry name" value="Calcium-dependent protein kinase 7"/>
    <property type="match status" value="1"/>
</dbReference>
<dbReference type="Gene3D" id="1.10.238.10">
    <property type="entry name" value="EF-hand"/>
    <property type="match status" value="1"/>
</dbReference>
<dbReference type="Gene3D" id="3.30.200.20">
    <property type="entry name" value="Phosphorylase Kinase, domain 1"/>
    <property type="match status" value="1"/>
</dbReference>
<dbReference type="Gene3D" id="1.10.510.10">
    <property type="entry name" value="Transferase(Phosphotransferase) domain 1"/>
    <property type="match status" value="1"/>
</dbReference>
<dbReference type="InterPro" id="IPR050205">
    <property type="entry name" value="CDPK_Ser/Thr_kinases"/>
</dbReference>
<dbReference type="InterPro" id="IPR011992">
    <property type="entry name" value="EF-hand-dom_pair"/>
</dbReference>
<dbReference type="InterPro" id="IPR018247">
    <property type="entry name" value="EF_Hand_1_Ca_BS"/>
</dbReference>
<dbReference type="InterPro" id="IPR002048">
    <property type="entry name" value="EF_hand_dom"/>
</dbReference>
<dbReference type="InterPro" id="IPR011009">
    <property type="entry name" value="Kinase-like_dom_sf"/>
</dbReference>
<dbReference type="InterPro" id="IPR000719">
    <property type="entry name" value="Prot_kinase_dom"/>
</dbReference>
<dbReference type="InterPro" id="IPR017441">
    <property type="entry name" value="Protein_kinase_ATP_BS"/>
</dbReference>
<dbReference type="InterPro" id="IPR008271">
    <property type="entry name" value="Ser/Thr_kinase_AS"/>
</dbReference>
<dbReference type="PANTHER" id="PTHR24349">
    <property type="entry name" value="SERINE/THREONINE-PROTEIN KINASE"/>
    <property type="match status" value="1"/>
</dbReference>
<dbReference type="Pfam" id="PF13499">
    <property type="entry name" value="EF-hand_7"/>
    <property type="match status" value="2"/>
</dbReference>
<dbReference type="Pfam" id="PF00069">
    <property type="entry name" value="Pkinase"/>
    <property type="match status" value="1"/>
</dbReference>
<dbReference type="SMART" id="SM00054">
    <property type="entry name" value="EFh"/>
    <property type="match status" value="4"/>
</dbReference>
<dbReference type="SMART" id="SM00220">
    <property type="entry name" value="S_TKc"/>
    <property type="match status" value="1"/>
</dbReference>
<dbReference type="SUPFAM" id="SSF47473">
    <property type="entry name" value="EF-hand"/>
    <property type="match status" value="1"/>
</dbReference>
<dbReference type="SUPFAM" id="SSF56112">
    <property type="entry name" value="Protein kinase-like (PK-like)"/>
    <property type="match status" value="1"/>
</dbReference>
<dbReference type="PROSITE" id="PS00018">
    <property type="entry name" value="EF_HAND_1"/>
    <property type="match status" value="3"/>
</dbReference>
<dbReference type="PROSITE" id="PS50222">
    <property type="entry name" value="EF_HAND_2"/>
    <property type="match status" value="4"/>
</dbReference>
<dbReference type="PROSITE" id="PS00107">
    <property type="entry name" value="PROTEIN_KINASE_ATP"/>
    <property type="match status" value="1"/>
</dbReference>
<dbReference type="PROSITE" id="PS50011">
    <property type="entry name" value="PROTEIN_KINASE_DOM"/>
    <property type="match status" value="1"/>
</dbReference>
<dbReference type="PROSITE" id="PS00108">
    <property type="entry name" value="PROTEIN_KINASE_ST"/>
    <property type="match status" value="1"/>
</dbReference>
<sequence>MGNCNACVRPDSKESKPSSKPKKPNRDRKLNPFAGDFTRSPAPIRVLKDVIPMSNQTQISDKYILGRELGRGEFGITYLCTDRETHEALACKSISKRKLRTAVDIEDVRREVAIMSTLPEHPNVVKLKASYEDNENVHLVMELCEGGELFDRIVARGHYTERAAAAVARTIAEVVMMCHSNGVMHRDLKPENFLFANKKENSPLKAIDFGLSVFFKPGDKFTEIVGSPYYMAPEVLKRDYGPGVDVWSAGVIIYILLCGVPPFWAETEQGVALAILRGVLDFKRDPWPQISESAKSLVKQMLDPDPTKRLTAQQVLAHPWIQNAKKAPNVPLGDIVRSRLKQFSMMNRFKKKVLRVIAEHLSIQEVEVIKNMFSLMDDDKDGKITYPELKAGLQKVGSQLGEPEIKMLMEVADVDGNGFLDYGEFVAVIIHLQKIENDELFKLAFMFFDKDGSTYIELDELREALADELGEPDASVLSDIMREVDTDKDGRINYDEFVTMMKAGTDWRKASRQYSRERFKSLSINLMKDGSLHLHDALTGQTVPV</sequence>
<accession>Q9M9V8</accession>
<accession>Q39015</accession>
<accession>Q84W07</accession>
<accession>Q9LME1</accession>